<accession>Q1GSH0</accession>
<name>HUTH_SPHAL</name>
<comment type="catalytic activity">
    <reaction evidence="1">
        <text>L-histidine = trans-urocanate + NH4(+)</text>
        <dbReference type="Rhea" id="RHEA:21232"/>
        <dbReference type="ChEBI" id="CHEBI:17771"/>
        <dbReference type="ChEBI" id="CHEBI:28938"/>
        <dbReference type="ChEBI" id="CHEBI:57595"/>
        <dbReference type="EC" id="4.3.1.3"/>
    </reaction>
</comment>
<comment type="pathway">
    <text evidence="1">Amino-acid degradation; L-histidine degradation into L-glutamate; N-formimidoyl-L-glutamate from L-histidine: step 1/3.</text>
</comment>
<comment type="subcellular location">
    <subcellularLocation>
        <location evidence="1">Cytoplasm</location>
    </subcellularLocation>
</comment>
<comment type="PTM">
    <text evidence="1">Contains an active site 4-methylidene-imidazol-5-one (MIO), which is formed autocatalytically by cyclization and dehydration of residues Ala-Ser-Gly.</text>
</comment>
<comment type="similarity">
    <text evidence="1">Belongs to the PAL/histidase family.</text>
</comment>
<organism>
    <name type="scientific">Sphingopyxis alaskensis (strain DSM 13593 / LMG 18877 / RB2256)</name>
    <name type="common">Sphingomonas alaskensis</name>
    <dbReference type="NCBI Taxonomy" id="317655"/>
    <lineage>
        <taxon>Bacteria</taxon>
        <taxon>Pseudomonadati</taxon>
        <taxon>Pseudomonadota</taxon>
        <taxon>Alphaproteobacteria</taxon>
        <taxon>Sphingomonadales</taxon>
        <taxon>Sphingomonadaceae</taxon>
        <taxon>Sphingopyxis</taxon>
    </lineage>
</organism>
<protein>
    <recommendedName>
        <fullName evidence="1">Histidine ammonia-lyase</fullName>
        <shortName evidence="1">Histidase</shortName>
        <ecNumber evidence="1">4.3.1.3</ecNumber>
    </recommendedName>
</protein>
<sequence length="509" mass="52149">MTVVTITPGAMSFADWRAIYEGASAALTVGAWDAIDASAAAVARIVAKGDPVYGINTGFGKLASVRIASDDLATLQRNIVLSHAAGTGAPSPTPVVRLMMALKLASFGVGASGVRRETAAMLEAMLARGLIPVVPSQGSVGASGDLAPLAHMAAAMIGVGKIDVGGAIMPAAEALAQAELTPLELGPKEGLALLNGTQFSTANALAGLFRAETLFRSALITGALSTEAAKGSDAPFDPRIHALRGHIGQREVGGALRTLMAGSAIRASHAIDDPRVQDPYCLRCQPQVMGAVLDLLRQAGATLGVEANGVSDNPLIFADSDEALSGGNFHAEPVAFAADMIAIALCEIGSIAERRIAMLVDPALSGLPAFLTPRPGLNSGFMIPQVTAAALVSENKQRAYPASVDSIPTSANQEDHVSMAAHGARRLLDMADNASAVIGIELLAACQGIDFHAPLKSSDALEAAHRHLRSHVPTLDDDRHFHPDMEAATALIRSGSLVAAVPASLPGVG</sequence>
<gene>
    <name evidence="1" type="primary">hutH</name>
    <name type="ordered locus">Sala_1689</name>
</gene>
<evidence type="ECO:0000255" key="1">
    <source>
        <dbReference type="HAMAP-Rule" id="MF_00229"/>
    </source>
</evidence>
<keyword id="KW-0963">Cytoplasm</keyword>
<keyword id="KW-0369">Histidine metabolism</keyword>
<keyword id="KW-0456">Lyase</keyword>
<keyword id="KW-1185">Reference proteome</keyword>
<dbReference type="EC" id="4.3.1.3" evidence="1"/>
<dbReference type="EMBL" id="CP000356">
    <property type="protein sequence ID" value="ABF53402.1"/>
    <property type="molecule type" value="Genomic_DNA"/>
</dbReference>
<dbReference type="RefSeq" id="WP_011541982.1">
    <property type="nucleotide sequence ID" value="NC_008048.1"/>
</dbReference>
<dbReference type="SMR" id="Q1GSH0"/>
<dbReference type="STRING" id="317655.Sala_1689"/>
<dbReference type="KEGG" id="sal:Sala_1689"/>
<dbReference type="eggNOG" id="COG2986">
    <property type="taxonomic scope" value="Bacteria"/>
</dbReference>
<dbReference type="HOGENOM" id="CLU_014801_4_0_5"/>
<dbReference type="OrthoDB" id="9806955at2"/>
<dbReference type="UniPathway" id="UPA00379">
    <property type="reaction ID" value="UER00549"/>
</dbReference>
<dbReference type="Proteomes" id="UP000006578">
    <property type="component" value="Chromosome"/>
</dbReference>
<dbReference type="GO" id="GO:0005737">
    <property type="term" value="C:cytoplasm"/>
    <property type="evidence" value="ECO:0007669"/>
    <property type="project" value="UniProtKB-SubCell"/>
</dbReference>
<dbReference type="GO" id="GO:0004397">
    <property type="term" value="F:histidine ammonia-lyase activity"/>
    <property type="evidence" value="ECO:0007669"/>
    <property type="project" value="UniProtKB-UniRule"/>
</dbReference>
<dbReference type="GO" id="GO:0019556">
    <property type="term" value="P:L-histidine catabolic process to glutamate and formamide"/>
    <property type="evidence" value="ECO:0007669"/>
    <property type="project" value="UniProtKB-UniPathway"/>
</dbReference>
<dbReference type="GO" id="GO:0019557">
    <property type="term" value="P:L-histidine catabolic process to glutamate and formate"/>
    <property type="evidence" value="ECO:0007669"/>
    <property type="project" value="UniProtKB-UniPathway"/>
</dbReference>
<dbReference type="CDD" id="cd00332">
    <property type="entry name" value="PAL-HAL"/>
    <property type="match status" value="1"/>
</dbReference>
<dbReference type="FunFam" id="1.10.275.10:FF:000005">
    <property type="entry name" value="Histidine ammonia-lyase"/>
    <property type="match status" value="1"/>
</dbReference>
<dbReference type="FunFam" id="1.20.200.10:FF:000003">
    <property type="entry name" value="Histidine ammonia-lyase"/>
    <property type="match status" value="1"/>
</dbReference>
<dbReference type="Gene3D" id="1.20.200.10">
    <property type="entry name" value="Fumarase/aspartase (Central domain)"/>
    <property type="match status" value="1"/>
</dbReference>
<dbReference type="Gene3D" id="1.10.275.10">
    <property type="entry name" value="Fumarase/aspartase (N-terminal domain)"/>
    <property type="match status" value="1"/>
</dbReference>
<dbReference type="HAMAP" id="MF_00229">
    <property type="entry name" value="His_ammonia_lyase"/>
    <property type="match status" value="1"/>
</dbReference>
<dbReference type="InterPro" id="IPR001106">
    <property type="entry name" value="Aromatic_Lyase"/>
</dbReference>
<dbReference type="InterPro" id="IPR024083">
    <property type="entry name" value="Fumarase/histidase_N"/>
</dbReference>
<dbReference type="InterPro" id="IPR005921">
    <property type="entry name" value="HutH"/>
</dbReference>
<dbReference type="InterPro" id="IPR008948">
    <property type="entry name" value="L-Aspartase-like"/>
</dbReference>
<dbReference type="InterPro" id="IPR022313">
    <property type="entry name" value="Phe/His_NH3-lyase_AS"/>
</dbReference>
<dbReference type="NCBIfam" id="TIGR01225">
    <property type="entry name" value="hutH"/>
    <property type="match status" value="1"/>
</dbReference>
<dbReference type="NCBIfam" id="NF006871">
    <property type="entry name" value="PRK09367.1"/>
    <property type="match status" value="1"/>
</dbReference>
<dbReference type="PANTHER" id="PTHR10362">
    <property type="entry name" value="HISTIDINE AMMONIA-LYASE"/>
    <property type="match status" value="1"/>
</dbReference>
<dbReference type="Pfam" id="PF00221">
    <property type="entry name" value="Lyase_aromatic"/>
    <property type="match status" value="1"/>
</dbReference>
<dbReference type="SUPFAM" id="SSF48557">
    <property type="entry name" value="L-aspartase-like"/>
    <property type="match status" value="1"/>
</dbReference>
<dbReference type="PROSITE" id="PS00488">
    <property type="entry name" value="PAL_HISTIDASE"/>
    <property type="match status" value="1"/>
</dbReference>
<reference key="1">
    <citation type="journal article" date="2009" name="Proc. Natl. Acad. Sci. U.S.A.">
        <title>The genomic basis of trophic strategy in marine bacteria.</title>
        <authorList>
            <person name="Lauro F.M."/>
            <person name="McDougald D."/>
            <person name="Thomas T."/>
            <person name="Williams T.J."/>
            <person name="Egan S."/>
            <person name="Rice S."/>
            <person name="DeMaere M.Z."/>
            <person name="Ting L."/>
            <person name="Ertan H."/>
            <person name="Johnson J."/>
            <person name="Ferriera S."/>
            <person name="Lapidus A."/>
            <person name="Anderson I."/>
            <person name="Kyrpides N."/>
            <person name="Munk A.C."/>
            <person name="Detter C."/>
            <person name="Han C.S."/>
            <person name="Brown M.V."/>
            <person name="Robb F.T."/>
            <person name="Kjelleberg S."/>
            <person name="Cavicchioli R."/>
        </authorList>
    </citation>
    <scope>NUCLEOTIDE SEQUENCE [LARGE SCALE GENOMIC DNA]</scope>
    <source>
        <strain>DSM 13593 / LMG 18877 / RB2256</strain>
    </source>
</reference>
<feature type="chain" id="PRO_1000078231" description="Histidine ammonia-lyase">
    <location>
        <begin position="1"/>
        <end position="509"/>
    </location>
</feature>
<feature type="modified residue" description="2,3-didehydroalanine (Ser)" evidence="1">
    <location>
        <position position="143"/>
    </location>
</feature>
<feature type="cross-link" description="5-imidazolinone (Ala-Gly)" evidence="1">
    <location>
        <begin position="142"/>
        <end position="144"/>
    </location>
</feature>
<proteinExistence type="inferred from homology"/>